<keyword id="KW-0496">Mitochondrion</keyword>
<dbReference type="EMBL" id="X15917">
    <property type="protein sequence ID" value="CAA34035.1"/>
    <property type="molecule type" value="Genomic_DNA"/>
</dbReference>
<dbReference type="PIR" id="S07756">
    <property type="entry name" value="S07756"/>
</dbReference>
<dbReference type="SMR" id="P15618"/>
<dbReference type="GO" id="GO:0005739">
    <property type="term" value="C:mitochondrion"/>
    <property type="evidence" value="ECO:0007669"/>
    <property type="project" value="UniProtKB-SubCell"/>
</dbReference>
<accession>P15618</accession>
<feature type="chain" id="PRO_0000196878" description="Uncharacterized mitochondrial protein ORF17">
    <location>
        <begin position="1"/>
        <end position="221"/>
    </location>
</feature>
<comment type="subcellular location">
    <subcellularLocation>
        <location evidence="1">Mitochondrion</location>
    </subcellularLocation>
</comment>
<evidence type="ECO:0000305" key="1"/>
<protein>
    <recommendedName>
        <fullName>Uncharacterized mitochondrial protein ORF17</fullName>
    </recommendedName>
</protein>
<geneLocation type="mitochondrion"/>
<organism>
    <name type="scientific">Paramecium tetraurelia</name>
    <dbReference type="NCBI Taxonomy" id="5888"/>
    <lineage>
        <taxon>Eukaryota</taxon>
        <taxon>Sar</taxon>
        <taxon>Alveolata</taxon>
        <taxon>Ciliophora</taxon>
        <taxon>Intramacronucleata</taxon>
        <taxon>Oligohymenophorea</taxon>
        <taxon>Peniculida</taxon>
        <taxon>Parameciidae</taxon>
        <taxon>Paramecium</taxon>
    </lineage>
</organism>
<name>YM17_PARTE</name>
<proteinExistence type="predicted"/>
<reference key="1">
    <citation type="journal article" date="1990" name="Nucleic Acids Res.">
        <title>Nucleotide sequence of the mitochondrial genome of Paramecium.</title>
        <authorList>
            <person name="Pritchard A.E."/>
            <person name="Seilhamer J.J."/>
            <person name="Mahalingam R."/>
            <person name="Sable C.L."/>
            <person name="Venuti S.E."/>
            <person name="Cummings D.J."/>
        </authorList>
    </citation>
    <scope>NUCLEOTIDE SEQUENCE [GENOMIC DNA]</scope>
    <source>
        <strain>Stock 51</strain>
    </source>
</reference>
<sequence length="221" mass="26346">MPLIFYSSCCFFLVSTSAFCSWVCSRPSQSSLCSLCLSCLFFILLFWSPSTSYLILVFFLLYTCVVLQTQLAYSLSAFMNYIGVLAFFTRLIVQFLRLVLMFVVYCMMHDTVMLQNYSQKNFLVGDSFWEELMSVQPNGTSIFFFLFATFPLRLFYWCYECMHTFFVVTVQFSAFFTIVFWLFLLFYTFFVYEKYEHHFDNITKMHKKLIEELKSLKKDSF</sequence>